<feature type="chain" id="PRO_0000242477" description="Photosystem II reaction center protein Psb30">
    <location>
        <begin position="1"/>
        <end position="33"/>
    </location>
</feature>
<feature type="transmembrane region" description="Helical" evidence="1">
    <location>
        <begin position="5"/>
        <end position="25"/>
    </location>
</feature>
<reference key="1">
    <citation type="journal article" date="2005" name="BMC Biol.">
        <title>The complete chloroplast DNA sequences of the charophycean green algae Staurastrum and Zygnema reveal that the chloroplast genome underwent extensive changes during the evolution of the Zygnematales.</title>
        <authorList>
            <person name="Turmel M."/>
            <person name="Otis C."/>
            <person name="Lemieux C."/>
        </authorList>
    </citation>
    <scope>NUCLEOTIDE SEQUENCE [LARGE SCALE GENOMIC DNA]</scope>
</reference>
<organism>
    <name type="scientific">Zygnema circumcarinatum</name>
    <name type="common">Green alga</name>
    <dbReference type="NCBI Taxonomy" id="35869"/>
    <lineage>
        <taxon>Eukaryota</taxon>
        <taxon>Viridiplantae</taxon>
        <taxon>Streptophyta</taxon>
        <taxon>Zygnematophyceae</taxon>
        <taxon>Zygnematophycidae</taxon>
        <taxon>Zygnematales</taxon>
        <taxon>Zygnemataceae</taxon>
        <taxon>Zygnema</taxon>
    </lineage>
</organism>
<accession>Q32RP1</accession>
<evidence type="ECO:0000255" key="1">
    <source>
        <dbReference type="HAMAP-Rule" id="MF_01329"/>
    </source>
</evidence>
<protein>
    <recommendedName>
        <fullName evidence="1">Photosystem II reaction center protein Psb30</fullName>
    </recommendedName>
    <alternativeName>
        <fullName evidence="1">Photosystem II reaction center protein Ycf12</fullName>
    </alternativeName>
</protein>
<keyword id="KW-0150">Chloroplast</keyword>
<keyword id="KW-0472">Membrane</keyword>
<keyword id="KW-0602">Photosynthesis</keyword>
<keyword id="KW-0604">Photosystem II</keyword>
<keyword id="KW-0934">Plastid</keyword>
<keyword id="KW-0793">Thylakoid</keyword>
<keyword id="KW-0812">Transmembrane</keyword>
<keyword id="KW-1133">Transmembrane helix</keyword>
<proteinExistence type="inferred from homology"/>
<gene>
    <name evidence="1" type="primary">psb30</name>
    <name evidence="1" type="synonym">ycf12</name>
</gene>
<name>PSB30_ZYGCR</name>
<geneLocation type="chloroplast"/>
<comment type="function">
    <text evidence="1">A core subunit of photosystem II (PSII), probably helps stabilize the reaction center.</text>
</comment>
<comment type="subunit">
    <text evidence="1">PSII is composed of 1 copy each of membrane proteins PsbA, PsbB, PsbC, PsbD, PsbE, PsbF, PsbH, PsbI, PsbJ, PsbK, PsbL, PsbM, PsbT, PsbX, PsbY, PsbZ, Psb30/Ycf12, peripheral proteins of the oxygen-evolving complex and a large number of cofactors. It forms dimeric complexes.</text>
</comment>
<comment type="subcellular location">
    <subcellularLocation>
        <location evidence="1">Plastid</location>
        <location evidence="1">Chloroplast thylakoid membrane</location>
        <topology evidence="1">Single-pass membrane protein</topology>
    </subcellularLocation>
</comment>
<comment type="similarity">
    <text evidence="1">Belongs to the Psb30/Ycf12 family.</text>
</comment>
<sequence>MNLEVVAQLTVLALIVVSGPLVIGLLALRKGNL</sequence>
<dbReference type="EMBL" id="AY958086">
    <property type="protein sequence ID" value="AAX45878.1"/>
    <property type="molecule type" value="Genomic_DNA"/>
</dbReference>
<dbReference type="RefSeq" id="YP_636485.1">
    <property type="nucleotide sequence ID" value="NC_008117.1"/>
</dbReference>
<dbReference type="SMR" id="Q32RP1"/>
<dbReference type="GeneID" id="4108198"/>
<dbReference type="GO" id="GO:0009535">
    <property type="term" value="C:chloroplast thylakoid membrane"/>
    <property type="evidence" value="ECO:0007669"/>
    <property type="project" value="UniProtKB-SubCell"/>
</dbReference>
<dbReference type="GO" id="GO:0009523">
    <property type="term" value="C:photosystem II"/>
    <property type="evidence" value="ECO:0007669"/>
    <property type="project" value="UniProtKB-KW"/>
</dbReference>
<dbReference type="GO" id="GO:0015979">
    <property type="term" value="P:photosynthesis"/>
    <property type="evidence" value="ECO:0007669"/>
    <property type="project" value="UniProtKB-KW"/>
</dbReference>
<dbReference type="HAMAP" id="MF_01329">
    <property type="entry name" value="PSII_Psb30_Ycf12"/>
    <property type="match status" value="1"/>
</dbReference>
<dbReference type="InterPro" id="IPR010284">
    <property type="entry name" value="PSII_Ycf12_core-subunit"/>
</dbReference>
<dbReference type="NCBIfam" id="NF010239">
    <property type="entry name" value="PRK13686.1"/>
    <property type="match status" value="1"/>
</dbReference>
<dbReference type="Pfam" id="PF05969">
    <property type="entry name" value="PSII_Ycf12"/>
    <property type="match status" value="1"/>
</dbReference>